<comment type="function">
    <text evidence="4">Probably involved in resistance to biotic and abiotic stresses. Confers tolerance to oxidative stress and mediates pathogenesis-related (PR) genes expression. Exhibits RNA-dependent ATPase and ATP-dependent RNA helicase activities in vitro.</text>
</comment>
<comment type="catalytic activity">
    <reaction>
        <text>ATP + H2O = ADP + phosphate + H(+)</text>
        <dbReference type="Rhea" id="RHEA:13065"/>
        <dbReference type="ChEBI" id="CHEBI:15377"/>
        <dbReference type="ChEBI" id="CHEBI:15378"/>
        <dbReference type="ChEBI" id="CHEBI:30616"/>
        <dbReference type="ChEBI" id="CHEBI:43474"/>
        <dbReference type="ChEBI" id="CHEBI:456216"/>
        <dbReference type="EC" id="3.6.4.13"/>
    </reaction>
</comment>
<comment type="induction">
    <text evidence="4">In leaves after treatment with defense-related signal chemicals such as benzothiadiazole (BTH), salicylic acid (SA), l-aminocyclopropane-1-carboxylic acid (ethylene-precursor), and jasmonic acid (JA). Also up-regulated during incompatible interaction with the blast fungus Magnaporthe grisea.</text>
</comment>
<comment type="domain">
    <text>The Q motif is unique to and characteristic of the DEAD box family of RNA helicases and controls ATP binding and hydrolysis.</text>
</comment>
<comment type="similarity">
    <text evidence="5">Belongs to the DEAD box helicase family.</text>
</comment>
<comment type="sequence caution" evidence="5">
    <conflict type="erroneous gene model prediction">
        <sequence resource="EMBL-CDS" id="AAN62787"/>
    </conflict>
</comment>
<comment type="sequence caution" evidence="5">
    <conflict type="erroneous initiation">
        <sequence resource="EMBL-CDS" id="BAF10616"/>
    </conflict>
    <text>Extended N-terminus.</text>
</comment>
<proteinExistence type="evidence at transcript level"/>
<feature type="chain" id="PRO_0000282519" description="DEAD-box ATP-dependent RNA helicase 50">
    <location>
        <begin position="1"/>
        <end position="641"/>
    </location>
</feature>
<feature type="domain" description="Helicase ATP-binding" evidence="1">
    <location>
        <begin position="271"/>
        <end position="452"/>
    </location>
</feature>
<feature type="domain" description="Helicase C-terminal" evidence="2">
    <location>
        <begin position="487"/>
        <end position="641"/>
    </location>
</feature>
<feature type="region of interest" description="Disordered" evidence="3">
    <location>
        <begin position="86"/>
        <end position="115"/>
    </location>
</feature>
<feature type="region of interest" description="Disordered" evidence="3">
    <location>
        <begin position="129"/>
        <end position="189"/>
    </location>
</feature>
<feature type="region of interest" description="Disordered" evidence="3">
    <location>
        <begin position="197"/>
        <end position="216"/>
    </location>
</feature>
<feature type="short sequence motif" description="Q motif">
    <location>
        <begin position="240"/>
        <end position="268"/>
    </location>
</feature>
<feature type="short sequence motif" description="DEAD box">
    <location>
        <begin position="399"/>
        <end position="402"/>
    </location>
</feature>
<feature type="compositionally biased region" description="Acidic residues" evidence="3">
    <location>
        <begin position="150"/>
        <end position="159"/>
    </location>
</feature>
<feature type="binding site" evidence="1">
    <location>
        <begin position="284"/>
        <end position="291"/>
    </location>
    <ligand>
        <name>ATP</name>
        <dbReference type="ChEBI" id="CHEBI:30616"/>
    </ligand>
</feature>
<organism>
    <name type="scientific">Oryza sativa subsp. japonica</name>
    <name type="common">Rice</name>
    <dbReference type="NCBI Taxonomy" id="39947"/>
    <lineage>
        <taxon>Eukaryota</taxon>
        <taxon>Viridiplantae</taxon>
        <taxon>Streptophyta</taxon>
        <taxon>Embryophyta</taxon>
        <taxon>Tracheophyta</taxon>
        <taxon>Spermatophyta</taxon>
        <taxon>Magnoliopsida</taxon>
        <taxon>Liliopsida</taxon>
        <taxon>Poales</taxon>
        <taxon>Poaceae</taxon>
        <taxon>BOP clade</taxon>
        <taxon>Oryzoideae</taxon>
        <taxon>Oryzeae</taxon>
        <taxon>Oryzinae</taxon>
        <taxon>Oryza</taxon>
        <taxon>Oryza sativa</taxon>
    </lineage>
</organism>
<dbReference type="EC" id="3.6.4.13"/>
<dbReference type="EMBL" id="AC113930">
    <property type="protein sequence ID" value="AAN62787.1"/>
    <property type="status" value="ALT_SEQ"/>
    <property type="molecule type" value="Genomic_DNA"/>
</dbReference>
<dbReference type="EMBL" id="DP000009">
    <property type="protein sequence ID" value="ABF93566.1"/>
    <property type="molecule type" value="Genomic_DNA"/>
</dbReference>
<dbReference type="EMBL" id="AP008209">
    <property type="protein sequence ID" value="BAF10616.1"/>
    <property type="status" value="ALT_INIT"/>
    <property type="molecule type" value="Genomic_DNA"/>
</dbReference>
<dbReference type="EMBL" id="AP014959">
    <property type="protein sequence ID" value="BAS81898.1"/>
    <property type="molecule type" value="Genomic_DNA"/>
</dbReference>
<dbReference type="EMBL" id="CM000140">
    <property type="protein sequence ID" value="EEE58182.1"/>
    <property type="molecule type" value="Genomic_DNA"/>
</dbReference>
<dbReference type="EMBL" id="AK065776">
    <property type="protein sequence ID" value="BAG89672.1"/>
    <property type="molecule type" value="mRNA"/>
</dbReference>
<dbReference type="SMR" id="Q0DVX2"/>
<dbReference type="FunCoup" id="Q0DVX2">
    <property type="interactions" value="576"/>
</dbReference>
<dbReference type="STRING" id="39947.Q0DVX2"/>
<dbReference type="PaxDb" id="39947-Q0DVX2"/>
<dbReference type="EnsemblPlants" id="Os03t0108600-01">
    <property type="protein sequence ID" value="Os03t0108600-01"/>
    <property type="gene ID" value="Os03g0108600"/>
</dbReference>
<dbReference type="Gramene" id="Os03t0108600-01">
    <property type="protein sequence ID" value="Os03t0108600-01"/>
    <property type="gene ID" value="Os03g0108600"/>
</dbReference>
<dbReference type="KEGG" id="dosa:Os03g0108600"/>
<dbReference type="eggNOG" id="KOG0331">
    <property type="taxonomic scope" value="Eukaryota"/>
</dbReference>
<dbReference type="HOGENOM" id="CLU_003041_24_1_1"/>
<dbReference type="InParanoid" id="Q0DVX2"/>
<dbReference type="OMA" id="GPANNDP"/>
<dbReference type="Proteomes" id="UP000000763">
    <property type="component" value="Chromosome 3"/>
</dbReference>
<dbReference type="Proteomes" id="UP000007752">
    <property type="component" value="Chromosome 3"/>
</dbReference>
<dbReference type="Proteomes" id="UP000059680">
    <property type="component" value="Chromosome 3"/>
</dbReference>
<dbReference type="GO" id="GO:0005524">
    <property type="term" value="F:ATP binding"/>
    <property type="evidence" value="ECO:0007669"/>
    <property type="project" value="UniProtKB-KW"/>
</dbReference>
<dbReference type="GO" id="GO:0016887">
    <property type="term" value="F:ATP hydrolysis activity"/>
    <property type="evidence" value="ECO:0007669"/>
    <property type="project" value="RHEA"/>
</dbReference>
<dbReference type="GO" id="GO:0003729">
    <property type="term" value="F:mRNA binding"/>
    <property type="evidence" value="ECO:0000318"/>
    <property type="project" value="GO_Central"/>
</dbReference>
<dbReference type="GO" id="GO:0003724">
    <property type="term" value="F:RNA helicase activity"/>
    <property type="evidence" value="ECO:0000314"/>
    <property type="project" value="UniProtKB"/>
</dbReference>
<dbReference type="GO" id="GO:0006968">
    <property type="term" value="P:cellular defense response"/>
    <property type="evidence" value="ECO:0000314"/>
    <property type="project" value="UniProtKB"/>
</dbReference>
<dbReference type="GO" id="GO:0071369">
    <property type="term" value="P:cellular response to ethylene stimulus"/>
    <property type="evidence" value="ECO:0000270"/>
    <property type="project" value="UniProtKB"/>
</dbReference>
<dbReference type="GO" id="GO:0071395">
    <property type="term" value="P:cellular response to jasmonic acid stimulus"/>
    <property type="evidence" value="ECO:0000270"/>
    <property type="project" value="UniProtKB"/>
</dbReference>
<dbReference type="GO" id="GO:0071446">
    <property type="term" value="P:cellular response to salicylic acid stimulus"/>
    <property type="evidence" value="ECO:0000270"/>
    <property type="project" value="UniProtKB"/>
</dbReference>
<dbReference type="GO" id="GO:0050832">
    <property type="term" value="P:defense response to fungus"/>
    <property type="evidence" value="ECO:0000314"/>
    <property type="project" value="UniProtKB"/>
</dbReference>
<dbReference type="CDD" id="cd00268">
    <property type="entry name" value="DEADc"/>
    <property type="match status" value="1"/>
</dbReference>
<dbReference type="CDD" id="cd18787">
    <property type="entry name" value="SF2_C_DEAD"/>
    <property type="match status" value="1"/>
</dbReference>
<dbReference type="FunFam" id="3.40.50.300:FF:001308">
    <property type="entry name" value="DEAD-box ATP-dependent RNA helicase 50"/>
    <property type="match status" value="1"/>
</dbReference>
<dbReference type="FunFam" id="3.40.50.300:FF:001942">
    <property type="entry name" value="DEAD-box ATP-dependent RNA helicase 50"/>
    <property type="match status" value="1"/>
</dbReference>
<dbReference type="Gene3D" id="3.40.50.300">
    <property type="entry name" value="P-loop containing nucleotide triphosphate hydrolases"/>
    <property type="match status" value="2"/>
</dbReference>
<dbReference type="InterPro" id="IPR011545">
    <property type="entry name" value="DEAD/DEAH_box_helicase_dom"/>
</dbReference>
<dbReference type="InterPro" id="IPR014001">
    <property type="entry name" value="Helicase_ATP-bd"/>
</dbReference>
<dbReference type="InterPro" id="IPR001650">
    <property type="entry name" value="Helicase_C-like"/>
</dbReference>
<dbReference type="InterPro" id="IPR027417">
    <property type="entry name" value="P-loop_NTPase"/>
</dbReference>
<dbReference type="InterPro" id="IPR014014">
    <property type="entry name" value="RNA_helicase_DEAD_Q_motif"/>
</dbReference>
<dbReference type="PANTHER" id="PTHR47960">
    <property type="entry name" value="DEAD-BOX ATP-DEPENDENT RNA HELICASE 50"/>
    <property type="match status" value="1"/>
</dbReference>
<dbReference type="Pfam" id="PF00270">
    <property type="entry name" value="DEAD"/>
    <property type="match status" value="1"/>
</dbReference>
<dbReference type="Pfam" id="PF00271">
    <property type="entry name" value="Helicase_C"/>
    <property type="match status" value="1"/>
</dbReference>
<dbReference type="SMART" id="SM00487">
    <property type="entry name" value="DEXDc"/>
    <property type="match status" value="1"/>
</dbReference>
<dbReference type="SMART" id="SM00490">
    <property type="entry name" value="HELICc"/>
    <property type="match status" value="1"/>
</dbReference>
<dbReference type="SUPFAM" id="SSF52540">
    <property type="entry name" value="P-loop containing nucleoside triphosphate hydrolases"/>
    <property type="match status" value="1"/>
</dbReference>
<dbReference type="PROSITE" id="PS51192">
    <property type="entry name" value="HELICASE_ATP_BIND_1"/>
    <property type="match status" value="1"/>
</dbReference>
<dbReference type="PROSITE" id="PS51194">
    <property type="entry name" value="HELICASE_CTER"/>
    <property type="match status" value="1"/>
</dbReference>
<dbReference type="PROSITE" id="PS51195">
    <property type="entry name" value="Q_MOTIF"/>
    <property type="match status" value="1"/>
</dbReference>
<name>RH50_ORYSJ</name>
<sequence length="641" mass="70803">MEVAGAQAGILPLLLRHPASLRGSLSLSCGGARRSWAAAAATAEGGGGEEGRGYERVPMDTPGAYRLVDRATGRSVIVWGGTDDVSMPSPAVLSTTTRVPDRPKENGRSTSIGNFGRLKAQKVKVLARRSAHLKREDSGRISTSRFSESPSDESDEDGTYFERDRARNTRQNSRSRDDKTRGAHSLNSVLRQYRGADDLDFPGSEATSGSKRWGNISDVTFGRQNQRQKGPLDSGFFSRRSFKEIGCSDEILGALRSFGFPRPSHIQAMAYRPVLEGKSCIIGDQSGSGKTLAYLCPVVQNLRKEEVEGLHRSSPRNPRVVVLTPTAELASQVLNNCRSISKSGVPFRSMVATGGFRQKTQLESLDQELDVLIATPGRFLYLLQEGFVQLNNLRCVVLDEVDILYGEESFEQVLHQLITVAPLTTQYLFVTATLPLDIYNKVVETFPDCELIMGPGVHRTSSRLEEILVDCSGDDNEEKNPETAFSNKKSALVKIIEESPVRKTIIFCNKIETCRKVENALRRVDRKASQIKVLPFHAALDQQQRIANIKEFLNKQTADSMFLVCTDRASRGIDFANVNHVVLFDYPRDPSEYVRRVGRTARGASGNGKAFVFAVGKQVSLARRVMERNIKGHPLHDVPCV</sequence>
<keyword id="KW-0067">ATP-binding</keyword>
<keyword id="KW-0347">Helicase</keyword>
<keyword id="KW-0378">Hydrolase</keyword>
<keyword id="KW-0547">Nucleotide-binding</keyword>
<keyword id="KW-0611">Plant defense</keyword>
<keyword id="KW-1185">Reference proteome</keyword>
<keyword id="KW-0694">RNA-binding</keyword>
<reference key="1">
    <citation type="journal article" date="2005" name="Genome Res.">
        <title>Sequence, annotation, and analysis of synteny between rice chromosome 3 and diverged grass species.</title>
        <authorList>
            <consortium name="The rice chromosome 3 sequencing consortium"/>
            <person name="Buell C.R."/>
            <person name="Yuan Q."/>
            <person name="Ouyang S."/>
            <person name="Liu J."/>
            <person name="Zhu W."/>
            <person name="Wang A."/>
            <person name="Maiti R."/>
            <person name="Haas B."/>
            <person name="Wortman J."/>
            <person name="Pertea M."/>
            <person name="Jones K.M."/>
            <person name="Kim M."/>
            <person name="Overton L."/>
            <person name="Tsitrin T."/>
            <person name="Fadrosh D."/>
            <person name="Bera J."/>
            <person name="Weaver B."/>
            <person name="Jin S."/>
            <person name="Johri S."/>
            <person name="Reardon M."/>
            <person name="Webb K."/>
            <person name="Hill J."/>
            <person name="Moffat K."/>
            <person name="Tallon L."/>
            <person name="Van Aken S."/>
            <person name="Lewis M."/>
            <person name="Utterback T."/>
            <person name="Feldblyum T."/>
            <person name="Zismann V."/>
            <person name="Iobst S."/>
            <person name="Hsiao J."/>
            <person name="de Vazeille A.R."/>
            <person name="Salzberg S.L."/>
            <person name="White O."/>
            <person name="Fraser C.M."/>
            <person name="Yu Y."/>
            <person name="Kim H."/>
            <person name="Rambo T."/>
            <person name="Currie J."/>
            <person name="Collura K."/>
            <person name="Kernodle-Thompson S."/>
            <person name="Wei F."/>
            <person name="Kudrna K."/>
            <person name="Ammiraju J.S.S."/>
            <person name="Luo M."/>
            <person name="Goicoechea J.L."/>
            <person name="Wing R.A."/>
            <person name="Henry D."/>
            <person name="Oates R."/>
            <person name="Palmer M."/>
            <person name="Pries G."/>
            <person name="Saski C."/>
            <person name="Simmons J."/>
            <person name="Soderlund C."/>
            <person name="Nelson W."/>
            <person name="de la Bastide M."/>
            <person name="Spiegel L."/>
            <person name="Nascimento L."/>
            <person name="Huang E."/>
            <person name="Preston R."/>
            <person name="Zutavern T."/>
            <person name="Palmer L."/>
            <person name="O'Shaughnessy A."/>
            <person name="Dike S."/>
            <person name="McCombie W.R."/>
            <person name="Minx P."/>
            <person name="Cordum H."/>
            <person name="Wilson R."/>
            <person name="Jin W."/>
            <person name="Lee H.R."/>
            <person name="Jiang J."/>
            <person name="Jackson S."/>
        </authorList>
    </citation>
    <scope>NUCLEOTIDE SEQUENCE [LARGE SCALE GENOMIC DNA]</scope>
    <source>
        <strain>cv. Nipponbare</strain>
    </source>
</reference>
<reference key="2">
    <citation type="journal article" date="2005" name="Nature">
        <title>The map-based sequence of the rice genome.</title>
        <authorList>
            <consortium name="International rice genome sequencing project (IRGSP)"/>
        </authorList>
    </citation>
    <scope>NUCLEOTIDE SEQUENCE [LARGE SCALE GENOMIC DNA]</scope>
    <source>
        <strain>cv. Nipponbare</strain>
    </source>
</reference>
<reference key="3">
    <citation type="journal article" date="2008" name="Nucleic Acids Res.">
        <title>The rice annotation project database (RAP-DB): 2008 update.</title>
        <authorList>
            <consortium name="The rice annotation project (RAP)"/>
        </authorList>
    </citation>
    <scope>GENOME REANNOTATION</scope>
    <source>
        <strain>cv. Nipponbare</strain>
    </source>
</reference>
<reference key="4">
    <citation type="journal article" date="2013" name="Rice">
        <title>Improvement of the Oryza sativa Nipponbare reference genome using next generation sequence and optical map data.</title>
        <authorList>
            <person name="Kawahara Y."/>
            <person name="de la Bastide M."/>
            <person name="Hamilton J.P."/>
            <person name="Kanamori H."/>
            <person name="McCombie W.R."/>
            <person name="Ouyang S."/>
            <person name="Schwartz D.C."/>
            <person name="Tanaka T."/>
            <person name="Wu J."/>
            <person name="Zhou S."/>
            <person name="Childs K.L."/>
            <person name="Davidson R.M."/>
            <person name="Lin H."/>
            <person name="Quesada-Ocampo L."/>
            <person name="Vaillancourt B."/>
            <person name="Sakai H."/>
            <person name="Lee S.S."/>
            <person name="Kim J."/>
            <person name="Numa H."/>
            <person name="Itoh T."/>
            <person name="Buell C.R."/>
            <person name="Matsumoto T."/>
        </authorList>
    </citation>
    <scope>GENOME REANNOTATION</scope>
    <source>
        <strain>cv. Nipponbare</strain>
    </source>
</reference>
<reference key="5">
    <citation type="journal article" date="2005" name="PLoS Biol.">
        <title>The genomes of Oryza sativa: a history of duplications.</title>
        <authorList>
            <person name="Yu J."/>
            <person name="Wang J."/>
            <person name="Lin W."/>
            <person name="Li S."/>
            <person name="Li H."/>
            <person name="Zhou J."/>
            <person name="Ni P."/>
            <person name="Dong W."/>
            <person name="Hu S."/>
            <person name="Zeng C."/>
            <person name="Zhang J."/>
            <person name="Zhang Y."/>
            <person name="Li R."/>
            <person name="Xu Z."/>
            <person name="Li S."/>
            <person name="Li X."/>
            <person name="Zheng H."/>
            <person name="Cong L."/>
            <person name="Lin L."/>
            <person name="Yin J."/>
            <person name="Geng J."/>
            <person name="Li G."/>
            <person name="Shi J."/>
            <person name="Liu J."/>
            <person name="Lv H."/>
            <person name="Li J."/>
            <person name="Wang J."/>
            <person name="Deng Y."/>
            <person name="Ran L."/>
            <person name="Shi X."/>
            <person name="Wang X."/>
            <person name="Wu Q."/>
            <person name="Li C."/>
            <person name="Ren X."/>
            <person name="Wang J."/>
            <person name="Wang X."/>
            <person name="Li D."/>
            <person name="Liu D."/>
            <person name="Zhang X."/>
            <person name="Ji Z."/>
            <person name="Zhao W."/>
            <person name="Sun Y."/>
            <person name="Zhang Z."/>
            <person name="Bao J."/>
            <person name="Han Y."/>
            <person name="Dong L."/>
            <person name="Ji J."/>
            <person name="Chen P."/>
            <person name="Wu S."/>
            <person name="Liu J."/>
            <person name="Xiao Y."/>
            <person name="Bu D."/>
            <person name="Tan J."/>
            <person name="Yang L."/>
            <person name="Ye C."/>
            <person name="Zhang J."/>
            <person name="Xu J."/>
            <person name="Zhou Y."/>
            <person name="Yu Y."/>
            <person name="Zhang B."/>
            <person name="Zhuang S."/>
            <person name="Wei H."/>
            <person name="Liu B."/>
            <person name="Lei M."/>
            <person name="Yu H."/>
            <person name="Li Y."/>
            <person name="Xu H."/>
            <person name="Wei S."/>
            <person name="He X."/>
            <person name="Fang L."/>
            <person name="Zhang Z."/>
            <person name="Zhang Y."/>
            <person name="Huang X."/>
            <person name="Su Z."/>
            <person name="Tong W."/>
            <person name="Li J."/>
            <person name="Tong Z."/>
            <person name="Li S."/>
            <person name="Ye J."/>
            <person name="Wang L."/>
            <person name="Fang L."/>
            <person name="Lei T."/>
            <person name="Chen C.-S."/>
            <person name="Chen H.-C."/>
            <person name="Xu Z."/>
            <person name="Li H."/>
            <person name="Huang H."/>
            <person name="Zhang F."/>
            <person name="Xu H."/>
            <person name="Li N."/>
            <person name="Zhao C."/>
            <person name="Li S."/>
            <person name="Dong L."/>
            <person name="Huang Y."/>
            <person name="Li L."/>
            <person name="Xi Y."/>
            <person name="Qi Q."/>
            <person name="Li W."/>
            <person name="Zhang B."/>
            <person name="Hu W."/>
            <person name="Zhang Y."/>
            <person name="Tian X."/>
            <person name="Jiao Y."/>
            <person name="Liang X."/>
            <person name="Jin J."/>
            <person name="Gao L."/>
            <person name="Zheng W."/>
            <person name="Hao B."/>
            <person name="Liu S.-M."/>
            <person name="Wang W."/>
            <person name="Yuan L."/>
            <person name="Cao M."/>
            <person name="McDermott J."/>
            <person name="Samudrala R."/>
            <person name="Wang J."/>
            <person name="Wong G.K.-S."/>
            <person name="Yang H."/>
        </authorList>
    </citation>
    <scope>NUCLEOTIDE SEQUENCE [LARGE SCALE GENOMIC DNA]</scope>
    <source>
        <strain>cv. Nipponbare</strain>
    </source>
</reference>
<reference key="6">
    <citation type="journal article" date="2003" name="Science">
        <title>Collection, mapping, and annotation of over 28,000 cDNA clones from japonica rice.</title>
        <authorList>
            <consortium name="The rice full-length cDNA consortium"/>
        </authorList>
    </citation>
    <scope>NUCLEOTIDE SEQUENCE [LARGE SCALE MRNA]</scope>
    <source>
        <strain>cv. Nipponbare</strain>
    </source>
</reference>
<reference key="7">
    <citation type="journal article" date="2008" name="J. Exp. Bot.">
        <title>OsBIRH1, a DEAD-box RNA helicase with functions in modulating defence responses against pathogen infection and oxidative stress.</title>
        <authorList>
            <person name="Li D."/>
            <person name="Liu H."/>
            <person name="Zhang H."/>
            <person name="Wang X."/>
            <person name="Song F."/>
        </authorList>
    </citation>
    <scope>FUNCTION</scope>
    <scope>INDUCTION BY BIOTIC AND ABIOTIC DEFENSE STIMULI</scope>
</reference>
<gene>
    <name type="ordered locus">Os03g0108600</name>
    <name type="ordered locus">LOC_Os03g01830</name>
    <name type="ORF">OJ1384D03.13</name>
    <name type="ORF">OsJ_09113</name>
</gene>
<protein>
    <recommendedName>
        <fullName>DEAD-box ATP-dependent RNA helicase 50</fullName>
        <ecNumber>3.6.4.13</ecNumber>
    </recommendedName>
</protein>
<evidence type="ECO:0000255" key="1">
    <source>
        <dbReference type="PROSITE-ProRule" id="PRU00541"/>
    </source>
</evidence>
<evidence type="ECO:0000255" key="2">
    <source>
        <dbReference type="PROSITE-ProRule" id="PRU00542"/>
    </source>
</evidence>
<evidence type="ECO:0000256" key="3">
    <source>
        <dbReference type="SAM" id="MobiDB-lite"/>
    </source>
</evidence>
<evidence type="ECO:0000269" key="4">
    <source>
    </source>
</evidence>
<evidence type="ECO:0000305" key="5"/>
<accession>Q0DVX2</accession>
<accession>A0A0P0VS39</accession>
<accession>B7EBC5</accession>
<accession>Q10SX0</accession>
<accession>Q8H7P8</accession>